<proteinExistence type="evidence at protein level"/>
<feature type="chain" id="PRO_0000435439" description="2-epi-5-epi-valiolone synthase">
    <location>
        <begin position="1"/>
        <end position="410"/>
    </location>
</feature>
<feature type="active site" evidence="2">
    <location>
        <position position="167"/>
    </location>
</feature>
<feature type="binding site" evidence="1">
    <location>
        <position position="66"/>
    </location>
    <ligand>
        <name>NAD(+)</name>
        <dbReference type="ChEBI" id="CHEBI:57540"/>
    </ligand>
</feature>
<feature type="binding site" evidence="1">
    <location>
        <begin position="97"/>
        <end position="100"/>
    </location>
    <ligand>
        <name>NAD(+)</name>
        <dbReference type="ChEBI" id="CHEBI:57540"/>
    </ligand>
</feature>
<feature type="binding site" evidence="1">
    <location>
        <begin position="130"/>
        <end position="134"/>
    </location>
    <ligand>
        <name>NAD(+)</name>
        <dbReference type="ChEBI" id="CHEBI:57540"/>
    </ligand>
</feature>
<feature type="binding site" evidence="1">
    <location>
        <begin position="154"/>
        <end position="155"/>
    </location>
    <ligand>
        <name>NAD(+)</name>
        <dbReference type="ChEBI" id="CHEBI:57540"/>
    </ligand>
</feature>
<feature type="binding site" evidence="1">
    <location>
        <position position="167"/>
    </location>
    <ligand>
        <name>NAD(+)</name>
        <dbReference type="ChEBI" id="CHEBI:57540"/>
    </ligand>
</feature>
<feature type="binding site" evidence="1">
    <location>
        <position position="176"/>
    </location>
    <ligand>
        <name>NAD(+)</name>
        <dbReference type="ChEBI" id="CHEBI:57540"/>
    </ligand>
</feature>
<feature type="binding site" evidence="1">
    <location>
        <begin position="194"/>
        <end position="197"/>
    </location>
    <ligand>
        <name>NAD(+)</name>
        <dbReference type="ChEBI" id="CHEBI:57540"/>
    </ligand>
</feature>
<feature type="binding site" evidence="1">
    <location>
        <position position="209"/>
    </location>
    <ligand>
        <name>a divalent metal cation</name>
        <dbReference type="ChEBI" id="CHEBI:60240"/>
    </ligand>
</feature>
<feature type="binding site" evidence="1">
    <location>
        <position position="280"/>
    </location>
    <ligand>
        <name>a divalent metal cation</name>
        <dbReference type="ChEBI" id="CHEBI:60240"/>
    </ligand>
</feature>
<feature type="binding site" evidence="1">
    <location>
        <position position="296"/>
    </location>
    <ligand>
        <name>a divalent metal cation</name>
        <dbReference type="ChEBI" id="CHEBI:60240"/>
    </ligand>
</feature>
<evidence type="ECO:0000250" key="1">
    <source>
        <dbReference type="UniProtKB" id="H2K887"/>
    </source>
</evidence>
<evidence type="ECO:0000250" key="2">
    <source>
        <dbReference type="UniProtKB" id="Q9S5E2"/>
    </source>
</evidence>
<evidence type="ECO:0000269" key="3">
    <source>
    </source>
</evidence>
<evidence type="ECO:0000303" key="4">
    <source>
    </source>
</evidence>
<evidence type="ECO:0000305" key="5"/>
<evidence type="ECO:0000312" key="6">
    <source>
        <dbReference type="EMBL" id="AJE80971.1"/>
    </source>
</evidence>
<keyword id="KW-0170">Cobalt</keyword>
<keyword id="KW-0456">Lyase</keyword>
<keyword id="KW-0479">Metal-binding</keyword>
<keyword id="KW-0520">NAD</keyword>
<keyword id="KW-0547">Nucleotide-binding</keyword>
<keyword id="KW-1185">Reference proteome</keyword>
<gene>
    <name evidence="4" type="primary">salQ</name>
    <name evidence="6" type="ORF">SLNWT_0595</name>
</gene>
<protein>
    <recommendedName>
        <fullName evidence="4">2-epi-5-epi-valiolone synthase</fullName>
        <shortName evidence="5">EEVS</shortName>
        <ecNumber evidence="3">4.2.3.152</ecNumber>
    </recommendedName>
</protein>
<sequence>MTGTSLTDTSSGLYFRDHSQGWLLRAQKQISYEVRLRDGIFRPECTDLLEQGAGTPGRSRRFVVVDSNVDLMYGNRIRSYFDYHGVDCSIMVVEANETLKNLETATRIVDEIDAFGIARRKEPLIVIGGGVLMDIVGLVASLYRRGAPFVRVPTTLIGLVDAGVGVKTGVNFNGHKNRLGTYTPADLTLLDRQFLATLDRRHIGNGLAEILKIALIKDLSLFAALEEHGPTLLDEKFQGSTAAGDRAARSVLHSAIHGMLDELQPNLWEAELERCVDYGHTFSPTVEMRALPELLHGEAVCVDMALTTVIAWRRGLLTEAQRDRIFAVMAALELPSWHPILDPDVLVNALQDTVRHRDGLQRLPLPVGIGGVTFVNDVTPRELEAAVTLQQELGDARTPKTSGDRGGRNL</sequence>
<name>SALQ_STRA4</name>
<comment type="function">
    <text evidence="3">Catalyzes the cyclization of D-sedoheptulose 7-phosphate to 2-epi-5-epi-valiolone. Involved in salbostatin biosynthesis.</text>
</comment>
<comment type="catalytic activity">
    <reaction evidence="3">
        <text>D-sedoheptulose 7-phosphate = 2-epi-5-epi-valiolone + phosphate</text>
        <dbReference type="Rhea" id="RHEA:44184"/>
        <dbReference type="ChEBI" id="CHEBI:43474"/>
        <dbReference type="ChEBI" id="CHEBI:57483"/>
        <dbReference type="ChEBI" id="CHEBI:84187"/>
        <dbReference type="EC" id="4.2.3.152"/>
    </reaction>
</comment>
<comment type="cofactor">
    <cofactor evidence="3">
        <name>NAD(+)</name>
        <dbReference type="ChEBI" id="CHEBI:57540"/>
    </cofactor>
</comment>
<comment type="cofactor">
    <cofactor evidence="3">
        <name>Co(2+)</name>
        <dbReference type="ChEBI" id="CHEBI:48828"/>
    </cofactor>
</comment>
<comment type="similarity">
    <text evidence="5">Belongs to the sugar phosphate cyclases superfamily. EEVS family.</text>
</comment>
<accession>A8D7K2</accession>
<accession>A0A0B5EQA8</accession>
<dbReference type="EC" id="4.2.3.152" evidence="3"/>
<dbReference type="EMBL" id="EU141958">
    <property type="protein sequence ID" value="ABV57470.1"/>
    <property type="molecule type" value="Genomic_DNA"/>
</dbReference>
<dbReference type="EMBL" id="CP010519">
    <property type="protein sequence ID" value="AJE80971.1"/>
    <property type="molecule type" value="Genomic_DNA"/>
</dbReference>
<dbReference type="SMR" id="A8D7K2"/>
<dbReference type="KEGG" id="sals:SLNWT_0595"/>
<dbReference type="BRENDA" id="4.2.3.152">
    <property type="organism ID" value="5971"/>
</dbReference>
<dbReference type="Proteomes" id="UP000031523">
    <property type="component" value="Chromosome"/>
</dbReference>
<dbReference type="GO" id="GO:0003856">
    <property type="term" value="F:3-dehydroquinate synthase activity"/>
    <property type="evidence" value="ECO:0007669"/>
    <property type="project" value="TreeGrafter"/>
</dbReference>
<dbReference type="GO" id="GO:0046872">
    <property type="term" value="F:metal ion binding"/>
    <property type="evidence" value="ECO:0007669"/>
    <property type="project" value="UniProtKB-KW"/>
</dbReference>
<dbReference type="GO" id="GO:0000166">
    <property type="term" value="F:nucleotide binding"/>
    <property type="evidence" value="ECO:0007669"/>
    <property type="project" value="UniProtKB-KW"/>
</dbReference>
<dbReference type="GO" id="GO:0017000">
    <property type="term" value="P:antibiotic biosynthetic process"/>
    <property type="evidence" value="ECO:0007669"/>
    <property type="project" value="InterPro"/>
</dbReference>
<dbReference type="CDD" id="cd08199">
    <property type="entry name" value="EEVS"/>
    <property type="match status" value="1"/>
</dbReference>
<dbReference type="Gene3D" id="3.40.50.1970">
    <property type="match status" value="1"/>
</dbReference>
<dbReference type="Gene3D" id="1.20.1090.10">
    <property type="entry name" value="Dehydroquinate synthase-like - alpha domain"/>
    <property type="match status" value="1"/>
</dbReference>
<dbReference type="InterPro" id="IPR050071">
    <property type="entry name" value="Dehydroquinate_synthase"/>
</dbReference>
<dbReference type="InterPro" id="IPR030960">
    <property type="entry name" value="DHQS/DOIS_N"/>
</dbReference>
<dbReference type="InterPro" id="IPR056179">
    <property type="entry name" value="DHQS_C"/>
</dbReference>
<dbReference type="InterPro" id="IPR035872">
    <property type="entry name" value="EEVS-like"/>
</dbReference>
<dbReference type="PANTHER" id="PTHR43622:SF3">
    <property type="entry name" value="2-EPI-5-EPI-VALIOLONE SYNTHASE"/>
    <property type="match status" value="1"/>
</dbReference>
<dbReference type="PANTHER" id="PTHR43622">
    <property type="entry name" value="3-DEHYDROQUINATE SYNTHASE"/>
    <property type="match status" value="1"/>
</dbReference>
<dbReference type="Pfam" id="PF01761">
    <property type="entry name" value="DHQ_synthase"/>
    <property type="match status" value="1"/>
</dbReference>
<dbReference type="Pfam" id="PF24621">
    <property type="entry name" value="DHQS_C"/>
    <property type="match status" value="1"/>
</dbReference>
<dbReference type="SUPFAM" id="SSF56796">
    <property type="entry name" value="Dehydroquinate synthase-like"/>
    <property type="match status" value="1"/>
</dbReference>
<organism>
    <name type="scientific">Streptomyces albus (strain ATCC 21838 / DSM 41398 / FERM P-419 / JCM 4703 / NBRC 107858)</name>
    <dbReference type="NCBI Taxonomy" id="1081613"/>
    <lineage>
        <taxon>Bacteria</taxon>
        <taxon>Bacillati</taxon>
        <taxon>Actinomycetota</taxon>
        <taxon>Actinomycetes</taxon>
        <taxon>Kitasatosporales</taxon>
        <taxon>Streptomycetaceae</taxon>
        <taxon>Streptomyces</taxon>
    </lineage>
</organism>
<reference key="1">
    <citation type="journal article" date="2008" name="Appl. Microbiol. Biotechnol.">
        <title>Genetic organization of the putative salbostatin biosynthetic gene cluster including the 2-epi-5-epi-valiolone synthase gene in Streptomyces albus ATCC 21838.</title>
        <authorList>
            <person name="Choi W.S."/>
            <person name="Wu X."/>
            <person name="Choeng Y.H."/>
            <person name="Mahmud T."/>
            <person name="Jeong B.C."/>
            <person name="Lee S.H."/>
            <person name="Chang Y.K."/>
            <person name="Kim C.J."/>
            <person name="Hong S.K."/>
        </authorList>
    </citation>
    <scope>NUCLEOTIDE SEQUENCE [GENOMIC DNA]</scope>
    <scope>FUNCTION</scope>
    <scope>CATALYTIC ACTIVITY</scope>
    <scope>COFACTOR</scope>
    <source>
        <strain>ATCC 21838 / DSM 41398 / FERM P-419 / JCM 4703 / NBRC 107858</strain>
    </source>
</reference>
<reference key="2">
    <citation type="submission" date="2015-01" db="EMBL/GenBank/DDBJ databases">
        <title>Enhanced salinomycin production by adjusting the supply of polyketide extender units in Streptomyce albus DSM 41398.</title>
        <authorList>
            <person name="Lu C."/>
        </authorList>
    </citation>
    <scope>NUCLEOTIDE SEQUENCE [LARGE SCALE GENOMIC DNA]</scope>
    <source>
        <strain>ATCC 21838 / DSM 41398 / FERM P-419 / JCM 4703 / NBRC 107858</strain>
    </source>
</reference>